<proteinExistence type="inferred from homology"/>
<dbReference type="EC" id="2.3.1.46" evidence="1"/>
<dbReference type="EMBL" id="AM181176">
    <property type="protein sequence ID" value="CAY53148.1"/>
    <property type="molecule type" value="Genomic_DNA"/>
</dbReference>
<dbReference type="SMR" id="C3K3L0"/>
<dbReference type="STRING" id="294.SRM1_05418"/>
<dbReference type="ESTHER" id="psef5-metx">
    <property type="family name" value="Homoserine_transacetylase"/>
</dbReference>
<dbReference type="PATRIC" id="fig|216595.4.peg.5888"/>
<dbReference type="eggNOG" id="COG2021">
    <property type="taxonomic scope" value="Bacteria"/>
</dbReference>
<dbReference type="HOGENOM" id="CLU_028760_1_2_6"/>
<dbReference type="OrthoDB" id="9800754at2"/>
<dbReference type="UniPathway" id="UPA00051">
    <property type="reaction ID" value="UER00075"/>
</dbReference>
<dbReference type="GO" id="GO:0005737">
    <property type="term" value="C:cytoplasm"/>
    <property type="evidence" value="ECO:0007669"/>
    <property type="project" value="UniProtKB-SubCell"/>
</dbReference>
<dbReference type="GO" id="GO:0004414">
    <property type="term" value="F:homoserine O-acetyltransferase activity"/>
    <property type="evidence" value="ECO:0007669"/>
    <property type="project" value="TreeGrafter"/>
</dbReference>
<dbReference type="GO" id="GO:0008899">
    <property type="term" value="F:homoserine O-succinyltransferase activity"/>
    <property type="evidence" value="ECO:0007669"/>
    <property type="project" value="UniProtKB-UniRule"/>
</dbReference>
<dbReference type="GO" id="GO:0009092">
    <property type="term" value="P:homoserine metabolic process"/>
    <property type="evidence" value="ECO:0007669"/>
    <property type="project" value="TreeGrafter"/>
</dbReference>
<dbReference type="GO" id="GO:0009086">
    <property type="term" value="P:methionine biosynthetic process"/>
    <property type="evidence" value="ECO:0007669"/>
    <property type="project" value="UniProtKB-UniRule"/>
</dbReference>
<dbReference type="FunFam" id="1.10.1740.110:FF:000001">
    <property type="entry name" value="Homoserine O-acetyltransferase"/>
    <property type="match status" value="1"/>
</dbReference>
<dbReference type="Gene3D" id="1.10.1740.110">
    <property type="match status" value="1"/>
</dbReference>
<dbReference type="Gene3D" id="3.40.50.1820">
    <property type="entry name" value="alpha/beta hydrolase"/>
    <property type="match status" value="1"/>
</dbReference>
<dbReference type="HAMAP" id="MF_00296">
    <property type="entry name" value="MetX_acyltransf"/>
    <property type="match status" value="1"/>
</dbReference>
<dbReference type="InterPro" id="IPR000073">
    <property type="entry name" value="AB_hydrolase_1"/>
</dbReference>
<dbReference type="InterPro" id="IPR029058">
    <property type="entry name" value="AB_hydrolase_fold"/>
</dbReference>
<dbReference type="InterPro" id="IPR008220">
    <property type="entry name" value="HAT_MetX-like"/>
</dbReference>
<dbReference type="NCBIfam" id="TIGR01392">
    <property type="entry name" value="homoserO_Ac_trn"/>
    <property type="match status" value="1"/>
</dbReference>
<dbReference type="NCBIfam" id="NF001209">
    <property type="entry name" value="PRK00175.1"/>
    <property type="match status" value="1"/>
</dbReference>
<dbReference type="PANTHER" id="PTHR32268">
    <property type="entry name" value="HOMOSERINE O-ACETYLTRANSFERASE"/>
    <property type="match status" value="1"/>
</dbReference>
<dbReference type="PANTHER" id="PTHR32268:SF11">
    <property type="entry name" value="HOMOSERINE O-ACETYLTRANSFERASE"/>
    <property type="match status" value="1"/>
</dbReference>
<dbReference type="Pfam" id="PF00561">
    <property type="entry name" value="Abhydrolase_1"/>
    <property type="match status" value="1"/>
</dbReference>
<dbReference type="PIRSF" id="PIRSF000443">
    <property type="entry name" value="Homoser_Ac_trans"/>
    <property type="match status" value="1"/>
</dbReference>
<dbReference type="SUPFAM" id="SSF53474">
    <property type="entry name" value="alpha/beta-Hydrolases"/>
    <property type="match status" value="1"/>
</dbReference>
<evidence type="ECO:0000255" key="1">
    <source>
        <dbReference type="HAMAP-Rule" id="MF_00296"/>
    </source>
</evidence>
<feature type="chain" id="PRO_1000204927" description="Homoserine O-succinyltransferase">
    <location>
        <begin position="1"/>
        <end position="379"/>
    </location>
</feature>
<feature type="domain" description="AB hydrolase-1" evidence="1">
    <location>
        <begin position="51"/>
        <end position="360"/>
    </location>
</feature>
<feature type="active site" description="Nucleophile" evidence="1">
    <location>
        <position position="157"/>
    </location>
</feature>
<feature type="active site" evidence="1">
    <location>
        <position position="323"/>
    </location>
</feature>
<feature type="active site" evidence="1">
    <location>
        <position position="356"/>
    </location>
</feature>
<feature type="binding site" evidence="1">
    <location>
        <position position="227"/>
    </location>
    <ligand>
        <name>substrate</name>
    </ligand>
</feature>
<feature type="binding site" evidence="1">
    <location>
        <position position="357"/>
    </location>
    <ligand>
        <name>substrate</name>
    </ligand>
</feature>
<feature type="site" description="Important for acyl-CoA specificity" evidence="1">
    <location>
        <position position="325"/>
    </location>
</feature>
<comment type="function">
    <text evidence="1">Transfers a succinyl group from succinyl-CoA to L-homoserine, forming succinyl-L-homoserine.</text>
</comment>
<comment type="catalytic activity">
    <reaction evidence="1">
        <text>L-homoserine + succinyl-CoA = O-succinyl-L-homoserine + CoA</text>
        <dbReference type="Rhea" id="RHEA:22008"/>
        <dbReference type="ChEBI" id="CHEBI:57287"/>
        <dbReference type="ChEBI" id="CHEBI:57292"/>
        <dbReference type="ChEBI" id="CHEBI:57476"/>
        <dbReference type="ChEBI" id="CHEBI:57661"/>
        <dbReference type="EC" id="2.3.1.46"/>
    </reaction>
</comment>
<comment type="pathway">
    <text evidence="1">Amino-acid biosynthesis; L-methionine biosynthesis via de novo pathway; O-succinyl-L-homoserine from L-homoserine: step 1/1.</text>
</comment>
<comment type="subunit">
    <text evidence="1">Homodimer.</text>
</comment>
<comment type="subcellular location">
    <subcellularLocation>
        <location evidence="1">Cytoplasm</location>
    </subcellularLocation>
</comment>
<comment type="similarity">
    <text evidence="1">Belongs to the AB hydrolase superfamily. MetX family.</text>
</comment>
<sequence>MPTAFPPDSVGLVVPQMAHFSEPLALACGRSLPAYDLIYETYGQLNATASNAVLICHALSGHHHAAGFHSVDERKPGWWDSCIGPGKPIDTNKFFVVSLNNLGGCNGSTGPSSLNPENGKPFGADFPVLTVEDWVHSQARLADLLGIDQWAAVIGGSLGGMQALQWTITYPDRVRHCLAIASAPKLSAQNIAFNEVARQAILTDPEFHGGSFQEAGVIPKRGLMLARMVGHITYLSDDSMGEKFGRGLKSEKLNYDFHSVEFQVESYLRYQGEEFSGRFDANTYLLMTKALDYFDPAANFDDDLAKTFEGATAKFCVMSFTTDWRFSPARSRELVDALMAARKDVCYLEIDAPQGHDAFLIPIPRYLQAFSNYMNRITL</sequence>
<name>METXS_PSEFS</name>
<gene>
    <name evidence="1" type="primary">metXS</name>
    <name type="ordered locus">PFLU_5766</name>
</gene>
<organism>
    <name type="scientific">Pseudomonas fluorescens (strain SBW25)</name>
    <dbReference type="NCBI Taxonomy" id="216595"/>
    <lineage>
        <taxon>Bacteria</taxon>
        <taxon>Pseudomonadati</taxon>
        <taxon>Pseudomonadota</taxon>
        <taxon>Gammaproteobacteria</taxon>
        <taxon>Pseudomonadales</taxon>
        <taxon>Pseudomonadaceae</taxon>
        <taxon>Pseudomonas</taxon>
    </lineage>
</organism>
<protein>
    <recommendedName>
        <fullName evidence="1">Homoserine O-succinyltransferase</fullName>
        <shortName evidence="1">HST</shortName>
        <ecNumber evidence="1">2.3.1.46</ecNumber>
    </recommendedName>
    <alternativeName>
        <fullName evidence="1">Homoserine transsuccinylase</fullName>
        <shortName evidence="1">HTS</shortName>
    </alternativeName>
</protein>
<accession>C3K3L0</accession>
<reference key="1">
    <citation type="journal article" date="2009" name="Genome Biol.">
        <title>Genomic and genetic analyses of diversity and plant interactions of Pseudomonas fluorescens.</title>
        <authorList>
            <person name="Silby M.W."/>
            <person name="Cerdeno-Tarraga A.M."/>
            <person name="Vernikos G.S."/>
            <person name="Giddens S.R."/>
            <person name="Jackson R.W."/>
            <person name="Preston G.M."/>
            <person name="Zhang X.-X."/>
            <person name="Moon C.D."/>
            <person name="Gehrig S.M."/>
            <person name="Godfrey S.A.C."/>
            <person name="Knight C.G."/>
            <person name="Malone J.G."/>
            <person name="Robinson Z."/>
            <person name="Spiers A.J."/>
            <person name="Harris S."/>
            <person name="Challis G.L."/>
            <person name="Yaxley A.M."/>
            <person name="Harris D."/>
            <person name="Seeger K."/>
            <person name="Murphy L."/>
            <person name="Rutter S."/>
            <person name="Squares R."/>
            <person name="Quail M.A."/>
            <person name="Saunders E."/>
            <person name="Mavromatis K."/>
            <person name="Brettin T.S."/>
            <person name="Bentley S.D."/>
            <person name="Hothersall J."/>
            <person name="Stephens E."/>
            <person name="Thomas C.M."/>
            <person name="Parkhill J."/>
            <person name="Levy S.B."/>
            <person name="Rainey P.B."/>
            <person name="Thomson N.R."/>
        </authorList>
    </citation>
    <scope>NUCLEOTIDE SEQUENCE [LARGE SCALE GENOMIC DNA]</scope>
    <source>
        <strain>SBW25</strain>
    </source>
</reference>
<keyword id="KW-0012">Acyltransferase</keyword>
<keyword id="KW-0028">Amino-acid biosynthesis</keyword>
<keyword id="KW-0963">Cytoplasm</keyword>
<keyword id="KW-0486">Methionine biosynthesis</keyword>
<keyword id="KW-0808">Transferase</keyword>